<evidence type="ECO:0000255" key="1">
    <source>
        <dbReference type="PROSITE-ProRule" id="PRU00111"/>
    </source>
</evidence>
<dbReference type="EMBL" id="M35009">
    <property type="protein sequence ID" value="AAA27558.1"/>
    <property type="molecule type" value="Genomic_DNA"/>
</dbReference>
<dbReference type="PIR" id="JH0237">
    <property type="entry name" value="JH0237"/>
</dbReference>
<dbReference type="SMR" id="P24508"/>
<dbReference type="STRING" id="663.BAU10_17430"/>
<dbReference type="GO" id="GO:0003700">
    <property type="term" value="F:DNA-binding transcription factor activity"/>
    <property type="evidence" value="ECO:0007669"/>
    <property type="project" value="TreeGrafter"/>
</dbReference>
<dbReference type="GO" id="GO:0000976">
    <property type="term" value="F:transcription cis-regulatory region binding"/>
    <property type="evidence" value="ECO:0007669"/>
    <property type="project" value="TreeGrafter"/>
</dbReference>
<dbReference type="CDD" id="cd01392">
    <property type="entry name" value="HTH_LacI"/>
    <property type="match status" value="1"/>
</dbReference>
<dbReference type="Gene3D" id="1.10.260.40">
    <property type="entry name" value="lambda repressor-like DNA-binding domains"/>
    <property type="match status" value="1"/>
</dbReference>
<dbReference type="InterPro" id="IPR000843">
    <property type="entry name" value="HTH_LacI"/>
</dbReference>
<dbReference type="InterPro" id="IPR010982">
    <property type="entry name" value="Lambda_DNA-bd_dom_sf"/>
</dbReference>
<dbReference type="InterPro" id="IPR006513">
    <property type="entry name" value="YtfJ_HI0045"/>
</dbReference>
<dbReference type="PANTHER" id="PTHR30146:SF146">
    <property type="entry name" value="HTH-TYPE TRANSCRIPTIONAL REGULATOR TRER"/>
    <property type="match status" value="1"/>
</dbReference>
<dbReference type="PANTHER" id="PTHR30146">
    <property type="entry name" value="LACI-RELATED TRANSCRIPTIONAL REPRESSOR"/>
    <property type="match status" value="1"/>
</dbReference>
<dbReference type="Pfam" id="PF00356">
    <property type="entry name" value="LacI"/>
    <property type="match status" value="1"/>
</dbReference>
<dbReference type="Pfam" id="PF09695">
    <property type="entry name" value="YtfJ_HI0045"/>
    <property type="match status" value="1"/>
</dbReference>
<dbReference type="PRINTS" id="PR00036">
    <property type="entry name" value="HTHLACI"/>
</dbReference>
<dbReference type="SMART" id="SM00354">
    <property type="entry name" value="HTH_LACI"/>
    <property type="match status" value="1"/>
</dbReference>
<dbReference type="SUPFAM" id="SSF47413">
    <property type="entry name" value="lambda repressor-like DNA-binding domains"/>
    <property type="match status" value="1"/>
</dbReference>
<dbReference type="PROSITE" id="PS00356">
    <property type="entry name" value="HTH_LACI_1"/>
    <property type="match status" value="1"/>
</dbReference>
<dbReference type="PROSITE" id="PS50932">
    <property type="entry name" value="HTH_LACI_2"/>
    <property type="match status" value="1"/>
</dbReference>
<protein>
    <recommendedName>
        <fullName>Sucrose operon repressor</fullName>
    </recommendedName>
    <alternativeName>
        <fullName>Scr operon regulatory protein</fullName>
    </alternativeName>
</protein>
<keyword id="KW-0238">DNA-binding</keyword>
<keyword id="KW-0678">Repressor</keyword>
<keyword id="KW-0804">Transcription</keyword>
<keyword id="KW-0805">Transcription regulation</keyword>
<feature type="chain" id="PRO_0000108004" description="Sucrose operon repressor">
    <location>
        <begin position="1"/>
        <end position="94"/>
    </location>
</feature>
<feature type="domain" description="HTH lacI-type" evidence="1">
    <location>
        <begin position="1"/>
        <end position="56"/>
    </location>
</feature>
<feature type="DNA-binding region" description="H-T-H motif" evidence="1">
    <location>
        <begin position="4"/>
        <end position="23"/>
    </location>
</feature>
<organism>
    <name type="scientific">Vibrio alginolyticus</name>
    <dbReference type="NCBI Taxonomy" id="663"/>
    <lineage>
        <taxon>Bacteria</taxon>
        <taxon>Pseudomonadati</taxon>
        <taxon>Pseudomonadota</taxon>
        <taxon>Gammaproteobacteria</taxon>
        <taxon>Vibrionales</taxon>
        <taxon>Vibrionaceae</taxon>
        <taxon>Vibrio</taxon>
    </lineage>
</organism>
<proteinExistence type="predicted"/>
<name>SCRR_VIBAL</name>
<accession>P24508</accession>
<sequence>MASLHDVARLAGVSKSTVSRVINDEYGVKEATKQKVRQAVAECGYVPNQVAKDLKEESSAIIVQDKTGKVLFVKEGALEQDEIAKVIELIKQNI</sequence>
<reference key="1">
    <citation type="journal article" date="1991" name="Gene">
        <title>Nucleotide sequence and analysis of the Vibrio alginolyticus scr repressor-encoding gene (scrR).</title>
        <authorList>
            <person name="Blatch G.L."/>
            <person name="Woods D.R."/>
        </authorList>
    </citation>
    <scope>NUCLEOTIDE SEQUENCE [GENOMIC DNA]</scope>
</reference>
<gene>
    <name type="primary">scrR</name>
</gene>
<comment type="function">
    <text>Repressor for the scr operon. Binds D-fructose as an inducer.</text>
</comment>